<evidence type="ECO:0000255" key="1">
    <source>
        <dbReference type="HAMAP-Rule" id="MF_01865"/>
    </source>
</evidence>
<evidence type="ECO:0000255" key="2">
    <source>
        <dbReference type="PROSITE-ProRule" id="PRU01266"/>
    </source>
</evidence>
<accession>Q10Y85</accession>
<sequence>MSTKPTIAFTHLGCEKNRIDTEHIIGLLVQAGYEVDANEELADYVVVNTCSFIQAAREESVKTLVELAEANKKIVIAGCMAQHFPEELLAELPEAIALVGTGDYHKIVDVMQRVEKGDRVKEVTAEPTYIADETTPRYRTTSEGVAYVRIAEGCDYRCAFCIIPHLRGKARSRTIESIVVEAQKLADQGVKEIILISQITTNYGIDIYGQPKLADLLEALGKVDIPWIRMHYAYPTGLTPKVITAIQDTPNILPYLDLPLQHSHPEILRAMNRPWQGQVNDDIIKRIKTAMPNAVLRTSFIVGFPGETEEHHSHLVEFVKRHEFDHVGVFTFSPEEGTPAYNLPNQLPQEVMDARRQEIMEVQQSISWQQNQKLVGQLVDVLIEQENPQTGELIGRSPRFSPEVDGLIYVKGEARLGCIVPVMITDADIYDLYGCLISSAA</sequence>
<name>RIMO_TRIEI</name>
<reference key="1">
    <citation type="journal article" date="2015" name="Proc. Natl. Acad. Sci. U.S.A.">
        <title>Trichodesmium genome maintains abundant, widespread noncoding DNA in situ, despite oligotrophic lifestyle.</title>
        <authorList>
            <person name="Walworth N."/>
            <person name="Pfreundt U."/>
            <person name="Nelson W.C."/>
            <person name="Mincer T."/>
            <person name="Heidelberg J.F."/>
            <person name="Fu F."/>
            <person name="Waterbury J.B."/>
            <person name="Glavina del Rio T."/>
            <person name="Goodwin L."/>
            <person name="Kyrpides N.C."/>
            <person name="Land M.L."/>
            <person name="Woyke T."/>
            <person name="Hutchins D.A."/>
            <person name="Hess W.R."/>
            <person name="Webb E.A."/>
        </authorList>
    </citation>
    <scope>NUCLEOTIDE SEQUENCE [LARGE SCALE GENOMIC DNA]</scope>
    <source>
        <strain>IMS101</strain>
    </source>
</reference>
<keyword id="KW-0004">4Fe-4S</keyword>
<keyword id="KW-0963">Cytoplasm</keyword>
<keyword id="KW-0408">Iron</keyword>
<keyword id="KW-0411">Iron-sulfur</keyword>
<keyword id="KW-0479">Metal-binding</keyword>
<keyword id="KW-0949">S-adenosyl-L-methionine</keyword>
<keyword id="KW-0808">Transferase</keyword>
<feature type="chain" id="PRO_0000375060" description="Ribosomal protein uS12 methylthiotransferase RimO">
    <location>
        <begin position="1"/>
        <end position="441"/>
    </location>
</feature>
<feature type="domain" description="MTTase N-terminal" evidence="1">
    <location>
        <begin position="5"/>
        <end position="116"/>
    </location>
</feature>
<feature type="domain" description="Radical SAM core" evidence="2">
    <location>
        <begin position="140"/>
        <end position="370"/>
    </location>
</feature>
<feature type="domain" description="TRAM" evidence="1">
    <location>
        <begin position="372"/>
        <end position="438"/>
    </location>
</feature>
<feature type="binding site" evidence="1">
    <location>
        <position position="14"/>
    </location>
    <ligand>
        <name>[4Fe-4S] cluster</name>
        <dbReference type="ChEBI" id="CHEBI:49883"/>
        <label>1</label>
    </ligand>
</feature>
<feature type="binding site" evidence="1">
    <location>
        <position position="50"/>
    </location>
    <ligand>
        <name>[4Fe-4S] cluster</name>
        <dbReference type="ChEBI" id="CHEBI:49883"/>
        <label>1</label>
    </ligand>
</feature>
<feature type="binding site" evidence="1">
    <location>
        <position position="79"/>
    </location>
    <ligand>
        <name>[4Fe-4S] cluster</name>
        <dbReference type="ChEBI" id="CHEBI:49883"/>
        <label>1</label>
    </ligand>
</feature>
<feature type="binding site" evidence="1">
    <location>
        <position position="154"/>
    </location>
    <ligand>
        <name>[4Fe-4S] cluster</name>
        <dbReference type="ChEBI" id="CHEBI:49883"/>
        <label>2</label>
        <note>4Fe-4S-S-AdoMet</note>
    </ligand>
</feature>
<feature type="binding site" evidence="1">
    <location>
        <position position="158"/>
    </location>
    <ligand>
        <name>[4Fe-4S] cluster</name>
        <dbReference type="ChEBI" id="CHEBI:49883"/>
        <label>2</label>
        <note>4Fe-4S-S-AdoMet</note>
    </ligand>
</feature>
<feature type="binding site" evidence="1">
    <location>
        <position position="161"/>
    </location>
    <ligand>
        <name>[4Fe-4S] cluster</name>
        <dbReference type="ChEBI" id="CHEBI:49883"/>
        <label>2</label>
        <note>4Fe-4S-S-AdoMet</note>
    </ligand>
</feature>
<proteinExistence type="inferred from homology"/>
<comment type="function">
    <text evidence="1">Catalyzes the methylthiolation of an aspartic acid residue of ribosomal protein uS12.</text>
</comment>
<comment type="catalytic activity">
    <reaction evidence="1">
        <text>L-aspartate(89)-[ribosomal protein uS12]-hydrogen + (sulfur carrier)-SH + AH2 + 2 S-adenosyl-L-methionine = 3-methylsulfanyl-L-aspartate(89)-[ribosomal protein uS12]-hydrogen + (sulfur carrier)-H + 5'-deoxyadenosine + L-methionine + A + S-adenosyl-L-homocysteine + 2 H(+)</text>
        <dbReference type="Rhea" id="RHEA:37087"/>
        <dbReference type="Rhea" id="RHEA-COMP:10460"/>
        <dbReference type="Rhea" id="RHEA-COMP:10461"/>
        <dbReference type="Rhea" id="RHEA-COMP:14737"/>
        <dbReference type="Rhea" id="RHEA-COMP:14739"/>
        <dbReference type="ChEBI" id="CHEBI:13193"/>
        <dbReference type="ChEBI" id="CHEBI:15378"/>
        <dbReference type="ChEBI" id="CHEBI:17319"/>
        <dbReference type="ChEBI" id="CHEBI:17499"/>
        <dbReference type="ChEBI" id="CHEBI:29917"/>
        <dbReference type="ChEBI" id="CHEBI:29961"/>
        <dbReference type="ChEBI" id="CHEBI:57844"/>
        <dbReference type="ChEBI" id="CHEBI:57856"/>
        <dbReference type="ChEBI" id="CHEBI:59789"/>
        <dbReference type="ChEBI" id="CHEBI:64428"/>
        <dbReference type="ChEBI" id="CHEBI:73599"/>
        <dbReference type="EC" id="2.8.4.4"/>
    </reaction>
</comment>
<comment type="cofactor">
    <cofactor evidence="1">
        <name>[4Fe-4S] cluster</name>
        <dbReference type="ChEBI" id="CHEBI:49883"/>
    </cofactor>
    <text evidence="1">Binds 2 [4Fe-4S] clusters. One cluster is coordinated with 3 cysteines and an exchangeable S-adenosyl-L-methionine.</text>
</comment>
<comment type="subcellular location">
    <subcellularLocation>
        <location evidence="1">Cytoplasm</location>
    </subcellularLocation>
</comment>
<comment type="similarity">
    <text evidence="1">Belongs to the methylthiotransferase family. RimO subfamily.</text>
</comment>
<protein>
    <recommendedName>
        <fullName evidence="1">Ribosomal protein uS12 methylthiotransferase RimO</fullName>
        <shortName evidence="1">uS12 MTTase</shortName>
        <shortName evidence="1">uS12 methylthiotransferase</shortName>
        <ecNumber evidence="1">2.8.4.4</ecNumber>
    </recommendedName>
    <alternativeName>
        <fullName evidence="1">Ribosomal protein uS12 (aspartate-C(3))-methylthiotransferase</fullName>
    </alternativeName>
    <alternativeName>
        <fullName evidence="1">Ribosome maturation factor RimO</fullName>
    </alternativeName>
</protein>
<organism>
    <name type="scientific">Trichodesmium erythraeum (strain IMS101)</name>
    <dbReference type="NCBI Taxonomy" id="203124"/>
    <lineage>
        <taxon>Bacteria</taxon>
        <taxon>Bacillati</taxon>
        <taxon>Cyanobacteriota</taxon>
        <taxon>Cyanophyceae</taxon>
        <taxon>Oscillatoriophycideae</taxon>
        <taxon>Oscillatoriales</taxon>
        <taxon>Microcoleaceae</taxon>
        <taxon>Trichodesmium</taxon>
    </lineage>
</organism>
<gene>
    <name evidence="1" type="primary">rimO</name>
    <name type="ordered locus">Tery_3733</name>
</gene>
<dbReference type="EC" id="2.8.4.4" evidence="1"/>
<dbReference type="EMBL" id="CP000393">
    <property type="protein sequence ID" value="ABG52789.1"/>
    <property type="molecule type" value="Genomic_DNA"/>
</dbReference>
<dbReference type="RefSeq" id="WP_011613120.1">
    <property type="nucleotide sequence ID" value="NC_008312.1"/>
</dbReference>
<dbReference type="SMR" id="Q10Y85"/>
<dbReference type="STRING" id="203124.Tery_3733"/>
<dbReference type="KEGG" id="ter:Tery_3733"/>
<dbReference type="eggNOG" id="COG0621">
    <property type="taxonomic scope" value="Bacteria"/>
</dbReference>
<dbReference type="HOGENOM" id="CLU_018697_0_1_3"/>
<dbReference type="OrthoDB" id="9805215at2"/>
<dbReference type="GO" id="GO:0005829">
    <property type="term" value="C:cytosol"/>
    <property type="evidence" value="ECO:0007669"/>
    <property type="project" value="TreeGrafter"/>
</dbReference>
<dbReference type="GO" id="GO:0051539">
    <property type="term" value="F:4 iron, 4 sulfur cluster binding"/>
    <property type="evidence" value="ECO:0007669"/>
    <property type="project" value="UniProtKB-UniRule"/>
</dbReference>
<dbReference type="GO" id="GO:0035599">
    <property type="term" value="F:aspartic acid methylthiotransferase activity"/>
    <property type="evidence" value="ECO:0007669"/>
    <property type="project" value="TreeGrafter"/>
</dbReference>
<dbReference type="GO" id="GO:0046872">
    <property type="term" value="F:metal ion binding"/>
    <property type="evidence" value="ECO:0007669"/>
    <property type="project" value="UniProtKB-KW"/>
</dbReference>
<dbReference type="GO" id="GO:0103039">
    <property type="term" value="F:protein methylthiotransferase activity"/>
    <property type="evidence" value="ECO:0007669"/>
    <property type="project" value="UniProtKB-EC"/>
</dbReference>
<dbReference type="GO" id="GO:0006400">
    <property type="term" value="P:tRNA modification"/>
    <property type="evidence" value="ECO:0007669"/>
    <property type="project" value="InterPro"/>
</dbReference>
<dbReference type="CDD" id="cd01335">
    <property type="entry name" value="Radical_SAM"/>
    <property type="match status" value="1"/>
</dbReference>
<dbReference type="FunFam" id="3.80.30.20:FF:000001">
    <property type="entry name" value="tRNA-2-methylthio-N(6)-dimethylallyladenosine synthase 2"/>
    <property type="match status" value="1"/>
</dbReference>
<dbReference type="Gene3D" id="3.40.50.12160">
    <property type="entry name" value="Methylthiotransferase, N-terminal domain"/>
    <property type="match status" value="1"/>
</dbReference>
<dbReference type="Gene3D" id="2.40.50.140">
    <property type="entry name" value="Nucleic acid-binding proteins"/>
    <property type="match status" value="1"/>
</dbReference>
<dbReference type="Gene3D" id="3.80.30.20">
    <property type="entry name" value="tm_1862 like domain"/>
    <property type="match status" value="1"/>
</dbReference>
<dbReference type="HAMAP" id="MF_01865">
    <property type="entry name" value="MTTase_RimO"/>
    <property type="match status" value="1"/>
</dbReference>
<dbReference type="InterPro" id="IPR006638">
    <property type="entry name" value="Elp3/MiaA/NifB-like_rSAM"/>
</dbReference>
<dbReference type="InterPro" id="IPR005839">
    <property type="entry name" value="Methylthiotransferase"/>
</dbReference>
<dbReference type="InterPro" id="IPR020612">
    <property type="entry name" value="Methylthiotransferase_CS"/>
</dbReference>
<dbReference type="InterPro" id="IPR013848">
    <property type="entry name" value="Methylthiotransferase_N"/>
</dbReference>
<dbReference type="InterPro" id="IPR038135">
    <property type="entry name" value="Methylthiotransferase_N_sf"/>
</dbReference>
<dbReference type="InterPro" id="IPR012340">
    <property type="entry name" value="NA-bd_OB-fold"/>
</dbReference>
<dbReference type="InterPro" id="IPR005840">
    <property type="entry name" value="Ribosomal_uS12_MeSTrfase_RimO"/>
</dbReference>
<dbReference type="InterPro" id="IPR007197">
    <property type="entry name" value="rSAM"/>
</dbReference>
<dbReference type="InterPro" id="IPR023404">
    <property type="entry name" value="rSAM_horseshoe"/>
</dbReference>
<dbReference type="InterPro" id="IPR002792">
    <property type="entry name" value="TRAM_dom"/>
</dbReference>
<dbReference type="NCBIfam" id="TIGR01125">
    <property type="entry name" value="30S ribosomal protein S12 methylthiotransferase RimO"/>
    <property type="match status" value="1"/>
</dbReference>
<dbReference type="NCBIfam" id="TIGR00089">
    <property type="entry name" value="MiaB/RimO family radical SAM methylthiotransferase"/>
    <property type="match status" value="1"/>
</dbReference>
<dbReference type="PANTHER" id="PTHR43837">
    <property type="entry name" value="RIBOSOMAL PROTEIN S12 METHYLTHIOTRANSFERASE RIMO"/>
    <property type="match status" value="1"/>
</dbReference>
<dbReference type="PANTHER" id="PTHR43837:SF1">
    <property type="entry name" value="RIBOSOMAL PROTEIN US12 METHYLTHIOTRANSFERASE RIMO"/>
    <property type="match status" value="1"/>
</dbReference>
<dbReference type="Pfam" id="PF04055">
    <property type="entry name" value="Radical_SAM"/>
    <property type="match status" value="1"/>
</dbReference>
<dbReference type="Pfam" id="PF18693">
    <property type="entry name" value="TRAM_2"/>
    <property type="match status" value="1"/>
</dbReference>
<dbReference type="Pfam" id="PF00919">
    <property type="entry name" value="UPF0004"/>
    <property type="match status" value="1"/>
</dbReference>
<dbReference type="SFLD" id="SFLDG01082">
    <property type="entry name" value="B12-binding_domain_containing"/>
    <property type="match status" value="1"/>
</dbReference>
<dbReference type="SFLD" id="SFLDG01061">
    <property type="entry name" value="methylthiotransferase"/>
    <property type="match status" value="1"/>
</dbReference>
<dbReference type="SFLD" id="SFLDF00274">
    <property type="entry name" value="ribosomal_protein_S12_methylth"/>
    <property type="match status" value="1"/>
</dbReference>
<dbReference type="SMART" id="SM00729">
    <property type="entry name" value="Elp3"/>
    <property type="match status" value="1"/>
</dbReference>
<dbReference type="SUPFAM" id="SSF102114">
    <property type="entry name" value="Radical SAM enzymes"/>
    <property type="match status" value="1"/>
</dbReference>
<dbReference type="PROSITE" id="PS51449">
    <property type="entry name" value="MTTASE_N"/>
    <property type="match status" value="1"/>
</dbReference>
<dbReference type="PROSITE" id="PS01278">
    <property type="entry name" value="MTTASE_RADICAL"/>
    <property type="match status" value="1"/>
</dbReference>
<dbReference type="PROSITE" id="PS51918">
    <property type="entry name" value="RADICAL_SAM"/>
    <property type="match status" value="1"/>
</dbReference>
<dbReference type="PROSITE" id="PS50926">
    <property type="entry name" value="TRAM"/>
    <property type="match status" value="1"/>
</dbReference>